<proteinExistence type="evidence at protein level"/>
<dbReference type="EMBL" id="X57130">
    <property type="protein sequence ID" value="CAA40409.1"/>
    <property type="molecule type" value="Genomic_DNA"/>
</dbReference>
<dbReference type="EMBL" id="AF531299">
    <property type="protein sequence ID" value="AAN06699.1"/>
    <property type="molecule type" value="Genomic_DNA"/>
</dbReference>
<dbReference type="EMBL" id="U91328">
    <property type="status" value="NOT_ANNOTATED_CDS"/>
    <property type="molecule type" value="Genomic_DNA"/>
</dbReference>
<dbReference type="EMBL" id="BC069492">
    <property type="protein sequence ID" value="AAH69492.1"/>
    <property type="molecule type" value="mRNA"/>
</dbReference>
<dbReference type="EMBL" id="BC101593">
    <property type="protein sequence ID" value="AAI01594.1"/>
    <property type="molecule type" value="mRNA"/>
</dbReference>
<dbReference type="EMBL" id="BC112140">
    <property type="protein sequence ID" value="AAI12141.1"/>
    <property type="molecule type" value="mRNA"/>
</dbReference>
<dbReference type="CCDS" id="CCDS4569.1"/>
<dbReference type="PIR" id="S26363">
    <property type="entry name" value="S26363"/>
</dbReference>
<dbReference type="RefSeq" id="NP_005316.1">
    <property type="nucleotide sequence ID" value="NM_005325.4"/>
</dbReference>
<dbReference type="PDB" id="9J8O">
    <property type="method" value="EM"/>
    <property type="resolution" value="4.05 A"/>
    <property type="chains" value="N/n=1-215"/>
</dbReference>
<dbReference type="PDBsum" id="9J8O"/>
<dbReference type="EMDB" id="EMD-61233"/>
<dbReference type="SMR" id="Q02539"/>
<dbReference type="BioGRID" id="109275">
    <property type="interactions" value="525"/>
</dbReference>
<dbReference type="CORUM" id="Q02539"/>
<dbReference type="FunCoup" id="Q02539">
    <property type="interactions" value="932"/>
</dbReference>
<dbReference type="IntAct" id="Q02539">
    <property type="interactions" value="358"/>
</dbReference>
<dbReference type="MINT" id="Q02539"/>
<dbReference type="STRING" id="9606.ENSP00000244573"/>
<dbReference type="CarbonylDB" id="Q02539"/>
<dbReference type="GlyGen" id="Q02539">
    <property type="glycosylation" value="1 site, 1 O-linked glycan (1 site)"/>
</dbReference>
<dbReference type="iPTMnet" id="Q02539"/>
<dbReference type="PhosphoSitePlus" id="Q02539"/>
<dbReference type="SwissPalm" id="Q02539"/>
<dbReference type="BioMuta" id="HIST1H1A"/>
<dbReference type="DMDM" id="18202479"/>
<dbReference type="jPOST" id="Q02539"/>
<dbReference type="MassIVE" id="Q02539"/>
<dbReference type="PaxDb" id="9606-ENSP00000244573"/>
<dbReference type="PeptideAtlas" id="Q02539"/>
<dbReference type="ProteomicsDB" id="58107"/>
<dbReference type="Pumba" id="Q02539"/>
<dbReference type="Antibodypedia" id="25489">
    <property type="antibodies" value="375 antibodies from 22 providers"/>
</dbReference>
<dbReference type="DNASU" id="3024"/>
<dbReference type="Ensembl" id="ENST00000244573.5">
    <property type="protein sequence ID" value="ENSP00000244573.4"/>
    <property type="gene ID" value="ENSG00000124610.5"/>
</dbReference>
<dbReference type="GeneID" id="3024"/>
<dbReference type="KEGG" id="hsa:3024"/>
<dbReference type="MANE-Select" id="ENST00000244573.5">
    <property type="protein sequence ID" value="ENSP00000244573.4"/>
    <property type="RefSeq nucleotide sequence ID" value="NM_005325.4"/>
    <property type="RefSeq protein sequence ID" value="NP_005316.1"/>
</dbReference>
<dbReference type="UCSC" id="uc003nfo.4">
    <property type="organism name" value="human"/>
</dbReference>
<dbReference type="AGR" id="HGNC:4715"/>
<dbReference type="CTD" id="3024"/>
<dbReference type="DisGeNET" id="3024"/>
<dbReference type="GeneCards" id="H1-1"/>
<dbReference type="HGNC" id="HGNC:4715">
    <property type="gene designation" value="H1-1"/>
</dbReference>
<dbReference type="HPA" id="ENSG00000124610">
    <property type="expression patterns" value="Not detected"/>
</dbReference>
<dbReference type="MIM" id="142709">
    <property type="type" value="gene"/>
</dbReference>
<dbReference type="neXtProt" id="NX_Q02539"/>
<dbReference type="OpenTargets" id="ENSG00000124610"/>
<dbReference type="VEuPathDB" id="HostDB:ENSG00000124610"/>
<dbReference type="eggNOG" id="KOG4012">
    <property type="taxonomic scope" value="Eukaryota"/>
</dbReference>
<dbReference type="GeneTree" id="ENSGT00940000163269"/>
<dbReference type="HOGENOM" id="CLU_052897_7_0_1"/>
<dbReference type="InParanoid" id="Q02539"/>
<dbReference type="OMA" id="HKEEART"/>
<dbReference type="OrthoDB" id="9634976at2759"/>
<dbReference type="PAN-GO" id="Q02539">
    <property type="GO annotations" value="6 GO annotations based on evolutionary models"/>
</dbReference>
<dbReference type="PhylomeDB" id="Q02539"/>
<dbReference type="TreeFam" id="TF313664"/>
<dbReference type="PathwayCommons" id="Q02539"/>
<dbReference type="Reactome" id="R-HSA-140342">
    <property type="pathway name" value="Apoptosis induced DNA fragmentation"/>
</dbReference>
<dbReference type="Reactome" id="R-HSA-2559584">
    <property type="pathway name" value="Formation of Senescence-Associated Heterochromatin Foci (SAHF)"/>
</dbReference>
<dbReference type="SignaLink" id="Q02539"/>
<dbReference type="SIGNOR" id="Q02539"/>
<dbReference type="BioGRID-ORCS" id="3024">
    <property type="hits" value="21 hits in 1146 CRISPR screens"/>
</dbReference>
<dbReference type="CD-CODE" id="91857CE7">
    <property type="entry name" value="Nucleolus"/>
</dbReference>
<dbReference type="GeneWiki" id="HIST1H1A"/>
<dbReference type="GenomeRNAi" id="3024"/>
<dbReference type="Pharos" id="Q02539">
    <property type="development level" value="Tbio"/>
</dbReference>
<dbReference type="PRO" id="PR:Q02539"/>
<dbReference type="Proteomes" id="UP000005640">
    <property type="component" value="Chromosome 6"/>
</dbReference>
<dbReference type="RNAct" id="Q02539">
    <property type="molecule type" value="protein"/>
</dbReference>
<dbReference type="Bgee" id="ENSG00000124610">
    <property type="expression patterns" value="Expressed in oocyte and 32 other cell types or tissues"/>
</dbReference>
<dbReference type="GO" id="GO:0009986">
    <property type="term" value="C:cell surface"/>
    <property type="evidence" value="ECO:0007669"/>
    <property type="project" value="Ensembl"/>
</dbReference>
<dbReference type="GO" id="GO:0000785">
    <property type="term" value="C:chromatin"/>
    <property type="evidence" value="ECO:0000314"/>
    <property type="project" value="UniProtKB"/>
</dbReference>
<dbReference type="GO" id="GO:0000791">
    <property type="term" value="C:euchromatin"/>
    <property type="evidence" value="ECO:0000314"/>
    <property type="project" value="UniProtKB"/>
</dbReference>
<dbReference type="GO" id="GO:0005654">
    <property type="term" value="C:nucleoplasm"/>
    <property type="evidence" value="ECO:0000314"/>
    <property type="project" value="HPA"/>
</dbReference>
<dbReference type="GO" id="GO:0000786">
    <property type="term" value="C:nucleosome"/>
    <property type="evidence" value="ECO:0007669"/>
    <property type="project" value="InterPro"/>
</dbReference>
<dbReference type="GO" id="GO:0005634">
    <property type="term" value="C:nucleus"/>
    <property type="evidence" value="ECO:0000318"/>
    <property type="project" value="GO_Central"/>
</dbReference>
<dbReference type="GO" id="GO:0031982">
    <property type="term" value="C:vesicle"/>
    <property type="evidence" value="ECO:0007669"/>
    <property type="project" value="Ensembl"/>
</dbReference>
<dbReference type="GO" id="GO:0031490">
    <property type="term" value="F:chromatin DNA binding"/>
    <property type="evidence" value="ECO:0000315"/>
    <property type="project" value="UniProtKB"/>
</dbReference>
<dbReference type="GO" id="GO:0003690">
    <property type="term" value="F:double-stranded DNA binding"/>
    <property type="evidence" value="ECO:0000318"/>
    <property type="project" value="GO_Central"/>
</dbReference>
<dbReference type="GO" id="GO:0008201">
    <property type="term" value="F:heparin binding"/>
    <property type="evidence" value="ECO:0007669"/>
    <property type="project" value="Ensembl"/>
</dbReference>
<dbReference type="GO" id="GO:0031492">
    <property type="term" value="F:nucleosomal DNA binding"/>
    <property type="evidence" value="ECO:0000318"/>
    <property type="project" value="GO_Central"/>
</dbReference>
<dbReference type="GO" id="GO:0030527">
    <property type="term" value="F:structural constituent of chromatin"/>
    <property type="evidence" value="ECO:0007669"/>
    <property type="project" value="InterPro"/>
</dbReference>
<dbReference type="GO" id="GO:0030261">
    <property type="term" value="P:chromosome condensation"/>
    <property type="evidence" value="ECO:0000318"/>
    <property type="project" value="GO_Central"/>
</dbReference>
<dbReference type="GO" id="GO:0045910">
    <property type="term" value="P:negative regulation of DNA recombination"/>
    <property type="evidence" value="ECO:0000318"/>
    <property type="project" value="GO_Central"/>
</dbReference>
<dbReference type="GO" id="GO:0006334">
    <property type="term" value="P:nucleosome assembly"/>
    <property type="evidence" value="ECO:0007669"/>
    <property type="project" value="InterPro"/>
</dbReference>
<dbReference type="GO" id="GO:0048260">
    <property type="term" value="P:positive regulation of receptor-mediated endocytosis"/>
    <property type="evidence" value="ECO:0007669"/>
    <property type="project" value="Ensembl"/>
</dbReference>
<dbReference type="GO" id="GO:0007283">
    <property type="term" value="P:spermatogenesis"/>
    <property type="evidence" value="ECO:0000318"/>
    <property type="project" value="GO_Central"/>
</dbReference>
<dbReference type="CDD" id="cd00073">
    <property type="entry name" value="H15"/>
    <property type="match status" value="1"/>
</dbReference>
<dbReference type="FunFam" id="1.10.10.10:FF:000075">
    <property type="entry name" value="Histone H1 like"/>
    <property type="match status" value="1"/>
</dbReference>
<dbReference type="Gene3D" id="1.10.10.10">
    <property type="entry name" value="Winged helix-like DNA-binding domain superfamily/Winged helix DNA-binding domain"/>
    <property type="match status" value="1"/>
</dbReference>
<dbReference type="InterPro" id="IPR005819">
    <property type="entry name" value="H1/H5"/>
</dbReference>
<dbReference type="InterPro" id="IPR005818">
    <property type="entry name" value="Histone_H1/H5_H15"/>
</dbReference>
<dbReference type="InterPro" id="IPR036388">
    <property type="entry name" value="WH-like_DNA-bd_sf"/>
</dbReference>
<dbReference type="InterPro" id="IPR036390">
    <property type="entry name" value="WH_DNA-bd_sf"/>
</dbReference>
<dbReference type="Pfam" id="PF00538">
    <property type="entry name" value="Linker_histone"/>
    <property type="match status" value="1"/>
</dbReference>
<dbReference type="PRINTS" id="PR00624">
    <property type="entry name" value="HISTONEH5"/>
</dbReference>
<dbReference type="SMART" id="SM00526">
    <property type="entry name" value="H15"/>
    <property type="match status" value="1"/>
</dbReference>
<dbReference type="SUPFAM" id="SSF46785">
    <property type="entry name" value="Winged helix' DNA-binding domain"/>
    <property type="match status" value="1"/>
</dbReference>
<dbReference type="PROSITE" id="PS51504">
    <property type="entry name" value="H15"/>
    <property type="match status" value="1"/>
</dbReference>
<evidence type="ECO:0000250" key="1"/>
<evidence type="ECO:0000250" key="2">
    <source>
        <dbReference type="UniProtKB" id="D4A3K5"/>
    </source>
</evidence>
<evidence type="ECO:0000250" key="3">
    <source>
        <dbReference type="UniProtKB" id="G3N131"/>
    </source>
</evidence>
<evidence type="ECO:0000250" key="4">
    <source>
        <dbReference type="UniProtKB" id="P43275"/>
    </source>
</evidence>
<evidence type="ECO:0000250" key="5">
    <source>
        <dbReference type="UniProtKB" id="P43277"/>
    </source>
</evidence>
<evidence type="ECO:0000255" key="6">
    <source>
        <dbReference type="PROSITE-ProRule" id="PRU00837"/>
    </source>
</evidence>
<evidence type="ECO:0000256" key="7">
    <source>
        <dbReference type="SAM" id="MobiDB-lite"/>
    </source>
</evidence>
<evidence type="ECO:0000269" key="8">
    <source>
    </source>
</evidence>
<evidence type="ECO:0000269" key="9">
    <source>
    </source>
</evidence>
<evidence type="ECO:0000269" key="10">
    <source>
    </source>
</evidence>
<evidence type="ECO:0000312" key="11">
    <source>
        <dbReference type="HGNC" id="HGNC:4715"/>
    </source>
</evidence>
<name>H11_HUMAN</name>
<reference key="1">
    <citation type="journal article" date="1989" name="Eur. J. Cell Biol.">
        <title>Human H1 histones: conserved and varied sequence elements in two H1 subtype genes.</title>
        <authorList>
            <person name="Eick S."/>
            <person name="Nicolai M."/>
            <person name="Mumberg D."/>
            <person name="Doenecke D."/>
        </authorList>
    </citation>
    <scope>NUCLEOTIDE SEQUENCE [GENOMIC DNA]</scope>
    <source>
        <tissue>Placenta</tissue>
    </source>
</reference>
<reference key="2">
    <citation type="journal article" date="2002" name="Genomics">
        <title>The human and mouse replication-dependent histone genes.</title>
        <authorList>
            <person name="Marzluff W.F."/>
            <person name="Gongidi P."/>
            <person name="Woods K.R."/>
            <person name="Jin J."/>
            <person name="Maltais L.J."/>
        </authorList>
    </citation>
    <scope>NUCLEOTIDE SEQUENCE [GENOMIC DNA]</scope>
</reference>
<reference key="3">
    <citation type="journal article" date="2003" name="Nature">
        <title>The DNA sequence and analysis of human chromosome 6.</title>
        <authorList>
            <person name="Mungall A.J."/>
            <person name="Palmer S.A."/>
            <person name="Sims S.K."/>
            <person name="Edwards C.A."/>
            <person name="Ashurst J.L."/>
            <person name="Wilming L."/>
            <person name="Jones M.C."/>
            <person name="Horton R."/>
            <person name="Hunt S.E."/>
            <person name="Scott C.E."/>
            <person name="Gilbert J.G.R."/>
            <person name="Clamp M.E."/>
            <person name="Bethel G."/>
            <person name="Milne S."/>
            <person name="Ainscough R."/>
            <person name="Almeida J.P."/>
            <person name="Ambrose K.D."/>
            <person name="Andrews T.D."/>
            <person name="Ashwell R.I.S."/>
            <person name="Babbage A.K."/>
            <person name="Bagguley C.L."/>
            <person name="Bailey J."/>
            <person name="Banerjee R."/>
            <person name="Barker D.J."/>
            <person name="Barlow K.F."/>
            <person name="Bates K."/>
            <person name="Beare D.M."/>
            <person name="Beasley H."/>
            <person name="Beasley O."/>
            <person name="Bird C.P."/>
            <person name="Blakey S.E."/>
            <person name="Bray-Allen S."/>
            <person name="Brook J."/>
            <person name="Brown A.J."/>
            <person name="Brown J.Y."/>
            <person name="Burford D.C."/>
            <person name="Burrill W."/>
            <person name="Burton J."/>
            <person name="Carder C."/>
            <person name="Carter N.P."/>
            <person name="Chapman J.C."/>
            <person name="Clark S.Y."/>
            <person name="Clark G."/>
            <person name="Clee C.M."/>
            <person name="Clegg S."/>
            <person name="Cobley V."/>
            <person name="Collier R.E."/>
            <person name="Collins J.E."/>
            <person name="Colman L.K."/>
            <person name="Corby N.R."/>
            <person name="Coville G.J."/>
            <person name="Culley K.M."/>
            <person name="Dhami P."/>
            <person name="Davies J."/>
            <person name="Dunn M."/>
            <person name="Earthrowl M.E."/>
            <person name="Ellington A.E."/>
            <person name="Evans K.A."/>
            <person name="Faulkner L."/>
            <person name="Francis M.D."/>
            <person name="Frankish A."/>
            <person name="Frankland J."/>
            <person name="French L."/>
            <person name="Garner P."/>
            <person name="Garnett J."/>
            <person name="Ghori M.J."/>
            <person name="Gilby L.M."/>
            <person name="Gillson C.J."/>
            <person name="Glithero R.J."/>
            <person name="Grafham D.V."/>
            <person name="Grant M."/>
            <person name="Gribble S."/>
            <person name="Griffiths C."/>
            <person name="Griffiths M.N.D."/>
            <person name="Hall R."/>
            <person name="Halls K.S."/>
            <person name="Hammond S."/>
            <person name="Harley J.L."/>
            <person name="Hart E.A."/>
            <person name="Heath P.D."/>
            <person name="Heathcott R."/>
            <person name="Holmes S.J."/>
            <person name="Howden P.J."/>
            <person name="Howe K.L."/>
            <person name="Howell G.R."/>
            <person name="Huckle E."/>
            <person name="Humphray S.J."/>
            <person name="Humphries M.D."/>
            <person name="Hunt A.R."/>
            <person name="Johnson C.M."/>
            <person name="Joy A.A."/>
            <person name="Kay M."/>
            <person name="Keenan S.J."/>
            <person name="Kimberley A.M."/>
            <person name="King A."/>
            <person name="Laird G.K."/>
            <person name="Langford C."/>
            <person name="Lawlor S."/>
            <person name="Leongamornlert D.A."/>
            <person name="Leversha M."/>
            <person name="Lloyd C.R."/>
            <person name="Lloyd D.M."/>
            <person name="Loveland J.E."/>
            <person name="Lovell J."/>
            <person name="Martin S."/>
            <person name="Mashreghi-Mohammadi M."/>
            <person name="Maslen G.L."/>
            <person name="Matthews L."/>
            <person name="McCann O.T."/>
            <person name="McLaren S.J."/>
            <person name="McLay K."/>
            <person name="McMurray A."/>
            <person name="Moore M.J.F."/>
            <person name="Mullikin J.C."/>
            <person name="Niblett D."/>
            <person name="Nickerson T."/>
            <person name="Novik K.L."/>
            <person name="Oliver K."/>
            <person name="Overton-Larty E.K."/>
            <person name="Parker A."/>
            <person name="Patel R."/>
            <person name="Pearce A.V."/>
            <person name="Peck A.I."/>
            <person name="Phillimore B.J.C.T."/>
            <person name="Phillips S."/>
            <person name="Plumb R.W."/>
            <person name="Porter K.M."/>
            <person name="Ramsey Y."/>
            <person name="Ranby S.A."/>
            <person name="Rice C.M."/>
            <person name="Ross M.T."/>
            <person name="Searle S.M."/>
            <person name="Sehra H.K."/>
            <person name="Sheridan E."/>
            <person name="Skuce C.D."/>
            <person name="Smith S."/>
            <person name="Smith M."/>
            <person name="Spraggon L."/>
            <person name="Squares S.L."/>
            <person name="Steward C.A."/>
            <person name="Sycamore N."/>
            <person name="Tamlyn-Hall G."/>
            <person name="Tester J."/>
            <person name="Theaker A.J."/>
            <person name="Thomas D.W."/>
            <person name="Thorpe A."/>
            <person name="Tracey A."/>
            <person name="Tromans A."/>
            <person name="Tubby B."/>
            <person name="Wall M."/>
            <person name="Wallis J.M."/>
            <person name="West A.P."/>
            <person name="White S.S."/>
            <person name="Whitehead S.L."/>
            <person name="Whittaker H."/>
            <person name="Wild A."/>
            <person name="Willey D.J."/>
            <person name="Wilmer T.E."/>
            <person name="Wood J.M."/>
            <person name="Wray P.W."/>
            <person name="Wyatt J.C."/>
            <person name="Young L."/>
            <person name="Younger R.M."/>
            <person name="Bentley D.R."/>
            <person name="Coulson A."/>
            <person name="Durbin R.M."/>
            <person name="Hubbard T."/>
            <person name="Sulston J.E."/>
            <person name="Dunham I."/>
            <person name="Rogers J."/>
            <person name="Beck S."/>
        </authorList>
    </citation>
    <scope>NUCLEOTIDE SEQUENCE [LARGE SCALE GENOMIC DNA]</scope>
</reference>
<reference key="4">
    <citation type="journal article" date="2004" name="Genome Res.">
        <title>The status, quality, and expansion of the NIH full-length cDNA project: the Mammalian Gene Collection (MGC).</title>
        <authorList>
            <consortium name="The MGC Project Team"/>
        </authorList>
    </citation>
    <scope>NUCLEOTIDE SEQUENCE [LARGE SCALE MRNA]</scope>
    <source>
        <tissue>Placenta</tissue>
    </source>
</reference>
<reference key="5">
    <citation type="journal article" date="1994" name="Protein Sci.">
        <title>A proposal for a coherent mammalian histone H1 nomenclature correlated with amino acid sequences.</title>
        <authorList>
            <person name="Parseghian M.H."/>
            <person name="Henschen A.H."/>
            <person name="Krieglstein K.G."/>
            <person name="Hamkalo B.A."/>
        </authorList>
    </citation>
    <scope>NOMENCLATURE</scope>
</reference>
<reference key="6">
    <citation type="journal article" date="2004" name="J. Biol. Chem.">
        <title>The C-terminal domain is the primary determinant of histone H1 binding to chromatin in vivo.</title>
        <authorList>
            <person name="Hendzel M.J."/>
            <person name="Lever M.A."/>
            <person name="Crawford E."/>
            <person name="Th'ng J.P."/>
        </authorList>
    </citation>
    <scope>DOMAIN</scope>
    <scope>MUTAGENESIS OF THR-152 AND SER-183</scope>
</reference>
<reference key="7">
    <citation type="journal article" date="2005" name="J. Biol. Chem.">
        <title>H1 family histones in the nucleus. Control of binding and localization by the C-terminal domain.</title>
        <authorList>
            <person name="Th'ng J.P."/>
            <person name="Sung R."/>
            <person name="Ye M."/>
            <person name="Hendzel M.J."/>
        </authorList>
    </citation>
    <scope>SUBCELLULAR LOCATION</scope>
</reference>
<reference key="8">
    <citation type="journal article" date="2010" name="Apoptosis">
        <title>Histone H1 subtype preferences of DFF40 and possible nuclear localization of DFF40/45 in normal and trichostatin A-treated NB4 leukemic cells.</title>
        <authorList>
            <person name="Ninios Y.P."/>
            <person name="Sekeri-Pataryas K.E."/>
            <person name="Sourlingas T.G."/>
        </authorList>
    </citation>
    <scope>INTERACTION WITH DFFB</scope>
</reference>
<reference key="9">
    <citation type="journal article" date="2011" name="BMC Syst. Biol.">
        <title>Initial characterization of the human central proteome.</title>
        <authorList>
            <person name="Burkard T.R."/>
            <person name="Planyavsky M."/>
            <person name="Kaupe I."/>
            <person name="Breitwieser F.P."/>
            <person name="Buerckstuemmer T."/>
            <person name="Bennett K.L."/>
            <person name="Superti-Furga G."/>
            <person name="Colinge J."/>
        </authorList>
    </citation>
    <scope>IDENTIFICATION BY MASS SPECTROMETRY [LARGE SCALE ANALYSIS]</scope>
</reference>
<feature type="initiator methionine" description="Removed" evidence="4">
    <location>
        <position position="1"/>
    </location>
</feature>
<feature type="chain" id="PRO_0000195905" description="Histone H1.1">
    <location>
        <begin position="2"/>
        <end position="215"/>
    </location>
</feature>
<feature type="domain" description="H15" evidence="6">
    <location>
        <begin position="39"/>
        <end position="112"/>
    </location>
</feature>
<feature type="region of interest" description="Disordered" evidence="7">
    <location>
        <begin position="1"/>
        <end position="43"/>
    </location>
</feature>
<feature type="region of interest" description="Disordered" evidence="7">
    <location>
        <begin position="94"/>
        <end position="215"/>
    </location>
</feature>
<feature type="compositionally biased region" description="Basic residues" evidence="7">
    <location>
        <begin position="20"/>
        <end position="38"/>
    </location>
</feature>
<feature type="compositionally biased region" description="Low complexity" evidence="7">
    <location>
        <begin position="122"/>
        <end position="147"/>
    </location>
</feature>
<feature type="compositionally biased region" description="Basic residues" evidence="7">
    <location>
        <begin position="148"/>
        <end position="181"/>
    </location>
</feature>
<feature type="compositionally biased region" description="Basic residues" evidence="7">
    <location>
        <begin position="188"/>
        <end position="215"/>
    </location>
</feature>
<feature type="modified residue" description="N-acetylserine" evidence="4">
    <location>
        <position position="2"/>
    </location>
</feature>
<feature type="modified residue" description="Phosphoserine" evidence="2">
    <location>
        <position position="2"/>
    </location>
</feature>
<feature type="modified residue" description="Phosphoserine" evidence="2">
    <location>
        <position position="12"/>
    </location>
</feature>
<feature type="modified residue" description="N6-acetyllysine" evidence="4">
    <location>
        <position position="17"/>
    </location>
</feature>
<feature type="modified residue" description="N6-(beta-hydroxybutyryl)lysine" evidence="5">
    <location>
        <position position="37"/>
    </location>
</feature>
<feature type="modified residue" description="Phosphoserine" evidence="2">
    <location>
        <position position="44"/>
    </location>
</feature>
<feature type="modified residue" description="N6-(beta-hydroxybutyryl)lysine" evidence="5">
    <location>
        <position position="55"/>
    </location>
</feature>
<feature type="modified residue" description="Citrulline" evidence="4">
    <location>
        <position position="57"/>
    </location>
</feature>
<feature type="modified residue" description="N6-(beta-hydroxybutyryl)lysine" evidence="5">
    <location>
        <position position="67"/>
    </location>
</feature>
<feature type="modified residue" description="N6-acetyllysine" evidence="4">
    <location>
        <position position="78"/>
    </location>
</feature>
<feature type="modified residue" description="N6-(beta-hydroxybutyryl)lysine" evidence="5">
    <location>
        <position position="88"/>
    </location>
</feature>
<feature type="modified residue" description="N6-(beta-hydroxybutyryl)lysine; alternate" evidence="5">
    <location>
        <position position="93"/>
    </location>
</feature>
<feature type="modified residue" description="N6-acetyllysine; alternate" evidence="4">
    <location>
        <position position="93"/>
    </location>
</feature>
<feature type="modified residue" description="Phosphoserine" evidence="3">
    <location>
        <position position="107"/>
    </location>
</feature>
<feature type="modified residue" description="N6-(beta-hydroxybutyryl)lysine" evidence="5">
    <location>
        <position position="109"/>
    </location>
</feature>
<feature type="modified residue" description="N6-acetyllysine" evidence="4">
    <location>
        <position position="125"/>
    </location>
</feature>
<feature type="modified residue" description="Phosphothreonine" evidence="4">
    <location>
        <position position="204"/>
    </location>
</feature>
<feature type="sequence variant" id="VAR_049301" description="In dbSNP:rs417751.">
    <original>T</original>
    <variation>I</variation>
    <location>
        <position position="99"/>
    </location>
</feature>
<feature type="sequence variant" id="VAR_049302" description="In dbSNP:rs34541321.">
    <original>S</original>
    <variation>F</variation>
    <location>
        <position position="115"/>
    </location>
</feature>
<feature type="sequence variant" id="VAR_049303" description="In dbSNP:rs16891235.">
    <original>K</original>
    <variation>R</variation>
    <location>
        <position position="140"/>
    </location>
</feature>
<feature type="mutagenesis site" description="Significant destabilization of binding to chromatin." evidence="8">
    <original>T</original>
    <variation>E</variation>
    <location>
        <position position="152"/>
    </location>
</feature>
<feature type="mutagenesis site" description="Significant destabilization of binding to chromatin." evidence="8">
    <original>S</original>
    <variation>E</variation>
    <location>
        <position position="183"/>
    </location>
</feature>
<sequence length="215" mass="21842">MSETVPPAPAASAAPEKPLAGKKAKKPAKAAAASKKKPAGPSVSELIVQAASSSKERGGVSLAALKKALAAAGYDVEKNNSRIKLGIKSLVSKGTLVQTKGTGASGSFKLNKKASSVETKPGASKVATKTKATGASKKLKKATGASKKSVKTPKKAKKPAATRKSSKNPKKPKTVKPKKVAKSPAKAKAVKPKAAKARVTKPKTAKPKKAAPKKK</sequence>
<organism>
    <name type="scientific">Homo sapiens</name>
    <name type="common">Human</name>
    <dbReference type="NCBI Taxonomy" id="9606"/>
    <lineage>
        <taxon>Eukaryota</taxon>
        <taxon>Metazoa</taxon>
        <taxon>Chordata</taxon>
        <taxon>Craniata</taxon>
        <taxon>Vertebrata</taxon>
        <taxon>Euteleostomi</taxon>
        <taxon>Mammalia</taxon>
        <taxon>Eutheria</taxon>
        <taxon>Euarchontoglires</taxon>
        <taxon>Primates</taxon>
        <taxon>Haplorrhini</taxon>
        <taxon>Catarrhini</taxon>
        <taxon>Hominidae</taxon>
        <taxon>Homo</taxon>
    </lineage>
</organism>
<keyword id="KW-0002">3D-structure</keyword>
<keyword id="KW-0007">Acetylation</keyword>
<keyword id="KW-0158">Chromosome</keyword>
<keyword id="KW-0164">Citrullination</keyword>
<keyword id="KW-0238">DNA-binding</keyword>
<keyword id="KW-0379">Hydroxylation</keyword>
<keyword id="KW-0539">Nucleus</keyword>
<keyword id="KW-0597">Phosphoprotein</keyword>
<keyword id="KW-1267">Proteomics identification</keyword>
<keyword id="KW-1185">Reference proteome</keyword>
<comment type="function">
    <text evidence="1">Histone H1 protein binds to linker DNA between nucleosomes forming the macromolecular structure known as the chromatin fiber. Histones H1 are necessary for the condensation of nucleosome chains into higher-order structured fibers. Also acts as a regulator of individual gene transcription through chromatin remodeling, nucleosome spacing and DNA methylation (By similarity).</text>
</comment>
<comment type="subunit">
    <text evidence="10">Interacts with DFFB.</text>
</comment>
<comment type="interaction">
    <interactant intactId="EBI-932603">
        <id>Q02539</id>
    </interactant>
    <interactant intactId="EBI-1642157">
        <id>Q8IUE6</id>
        <label>H2AC21</label>
    </interactant>
    <organismsDiffer>false</organismsDiffer>
    <experiments>3</experiments>
</comment>
<comment type="interaction">
    <interactant intactId="EBI-932603">
        <id>Q02539</id>
    </interactant>
    <interactant intactId="EBI-2514696">
        <id>Q10713</id>
        <label>PMPCA</label>
    </interactant>
    <organismsDiffer>false</organismsDiffer>
    <experiments>2</experiments>
</comment>
<comment type="interaction">
    <interactant intactId="EBI-932603">
        <id>Q02539</id>
    </interactant>
    <interactant intactId="EBI-3927802">
        <id>O94811</id>
        <label>TPPP</label>
    </interactant>
    <organismsDiffer>false</organismsDiffer>
    <experiments>2</experiments>
</comment>
<comment type="interaction">
    <interactant intactId="EBI-932603">
        <id>Q02539</id>
    </interactant>
    <interactant intactId="EBI-714067">
        <id>Q9NQZ2</id>
        <label>UTP3</label>
    </interactant>
    <organismsDiffer>false</organismsDiffer>
    <experiments>2</experiments>
</comment>
<comment type="interaction">
    <interactant intactId="EBI-932603">
        <id>Q02539</id>
    </interactant>
    <interactant intactId="EBI-7579996">
        <id>Q57V41</id>
        <label>SIR2rp1</label>
    </interactant>
    <organismsDiffer>true</organismsDiffer>
    <experiments>2</experiments>
</comment>
<comment type="subcellular location">
    <subcellularLocation>
        <location evidence="6 9">Nucleus</location>
    </subcellularLocation>
    <subcellularLocation>
        <location evidence="6 9">Chromosome</location>
    </subcellularLocation>
    <text>Mainly localizes in euchromatin.</text>
</comment>
<comment type="domain">
    <text evidence="8">The C-terminal domain is required for high-affinity binding to chromatin.</text>
</comment>
<comment type="PTM">
    <text evidence="4">H1 histones are progressively phosphorylated during the cell cycle, becoming maximally phosphorylated during late G2 phase and M phase, and being dephosphorylated sharply thereafter.</text>
</comment>
<comment type="PTM">
    <text evidence="4">Citrullination at Arg-57 (H1R54ci) by PADI4 takes place within the DNA-binding site of H1 and results in its displacement from chromatin and global chromatin decondensation, thereby promoting pluripotency and stem cell maintenance.</text>
</comment>
<comment type="similarity">
    <text evidence="6">Belongs to the histone H1/H5 family.</text>
</comment>
<gene>
    <name evidence="11" type="primary">H1-1</name>
    <name type="synonym">H1F1</name>
    <name type="synonym">HIST1H1A</name>
</gene>
<protein>
    <recommendedName>
        <fullName>Histone H1.1</fullName>
    </recommendedName>
    <alternativeName>
        <fullName>Histone H1a</fullName>
    </alternativeName>
</protein>
<accession>Q02539</accession>
<accession>Q3MJ34</accession>